<protein>
    <recommendedName>
        <fullName evidence="1">1-aminocyclopropane-1-carboxylate deaminase</fullName>
        <shortName evidence="1">ACC deaminase</shortName>
        <shortName evidence="1">ACCD</shortName>
        <ecNumber evidence="1">3.5.99.7</ecNumber>
    </recommendedName>
</protein>
<organism>
    <name type="scientific">Bradyrhizobium sp. (strain ORS 278)</name>
    <dbReference type="NCBI Taxonomy" id="114615"/>
    <lineage>
        <taxon>Bacteria</taxon>
        <taxon>Pseudomonadati</taxon>
        <taxon>Pseudomonadota</taxon>
        <taxon>Alphaproteobacteria</taxon>
        <taxon>Hyphomicrobiales</taxon>
        <taxon>Nitrobacteraceae</taxon>
        <taxon>Bradyrhizobium</taxon>
    </lineage>
</organism>
<accession>A4YUJ5</accession>
<proteinExistence type="inferred from homology"/>
<dbReference type="EC" id="3.5.99.7" evidence="1"/>
<dbReference type="EMBL" id="CU234118">
    <property type="protein sequence ID" value="CAL77571.1"/>
    <property type="molecule type" value="Genomic_DNA"/>
</dbReference>
<dbReference type="RefSeq" id="WP_011926709.1">
    <property type="nucleotide sequence ID" value="NC_009445.1"/>
</dbReference>
<dbReference type="SMR" id="A4YUJ5"/>
<dbReference type="STRING" id="114615.BRADO3803"/>
<dbReference type="KEGG" id="bra:BRADO3803"/>
<dbReference type="eggNOG" id="COG2515">
    <property type="taxonomic scope" value="Bacteria"/>
</dbReference>
<dbReference type="HOGENOM" id="CLU_048897_2_1_5"/>
<dbReference type="OrthoDB" id="9801249at2"/>
<dbReference type="Proteomes" id="UP000001994">
    <property type="component" value="Chromosome"/>
</dbReference>
<dbReference type="GO" id="GO:0008660">
    <property type="term" value="F:1-aminocyclopropane-1-carboxylate deaminase activity"/>
    <property type="evidence" value="ECO:0007669"/>
    <property type="project" value="UniProtKB-UniRule"/>
</dbReference>
<dbReference type="GO" id="GO:0019148">
    <property type="term" value="F:D-cysteine desulfhydrase activity"/>
    <property type="evidence" value="ECO:0007669"/>
    <property type="project" value="TreeGrafter"/>
</dbReference>
<dbReference type="GO" id="GO:0030170">
    <property type="term" value="F:pyridoxal phosphate binding"/>
    <property type="evidence" value="ECO:0007669"/>
    <property type="project" value="InterPro"/>
</dbReference>
<dbReference type="GO" id="GO:0018871">
    <property type="term" value="P:1-aminocyclopropane-1-carboxylate metabolic process"/>
    <property type="evidence" value="ECO:0007669"/>
    <property type="project" value="UniProtKB-UniRule"/>
</dbReference>
<dbReference type="GO" id="GO:0009310">
    <property type="term" value="P:amine catabolic process"/>
    <property type="evidence" value="ECO:0007669"/>
    <property type="project" value="InterPro"/>
</dbReference>
<dbReference type="CDD" id="cd06449">
    <property type="entry name" value="ACCD"/>
    <property type="match status" value="1"/>
</dbReference>
<dbReference type="Gene3D" id="3.40.50.1100">
    <property type="match status" value="2"/>
</dbReference>
<dbReference type="HAMAP" id="MF_00807">
    <property type="entry name" value="ACC_deaminase"/>
    <property type="match status" value="1"/>
</dbReference>
<dbReference type="InterPro" id="IPR027278">
    <property type="entry name" value="ACCD_DCysDesulf"/>
</dbReference>
<dbReference type="InterPro" id="IPR005965">
    <property type="entry name" value="ACP_carboxylate_deaminase"/>
</dbReference>
<dbReference type="InterPro" id="IPR020601">
    <property type="entry name" value="ACP_carboxylate_deaminase_bac"/>
</dbReference>
<dbReference type="InterPro" id="IPR001926">
    <property type="entry name" value="TrpB-like_PALP"/>
</dbReference>
<dbReference type="InterPro" id="IPR036052">
    <property type="entry name" value="TrpB-like_PALP_sf"/>
</dbReference>
<dbReference type="NCBIfam" id="TIGR01274">
    <property type="entry name" value="ACC_deam"/>
    <property type="match status" value="1"/>
</dbReference>
<dbReference type="PANTHER" id="PTHR43780">
    <property type="entry name" value="1-AMINOCYCLOPROPANE-1-CARBOXYLATE DEAMINASE-RELATED"/>
    <property type="match status" value="1"/>
</dbReference>
<dbReference type="PANTHER" id="PTHR43780:SF2">
    <property type="entry name" value="1-AMINOCYCLOPROPANE-1-CARBOXYLATE DEAMINASE-RELATED"/>
    <property type="match status" value="1"/>
</dbReference>
<dbReference type="Pfam" id="PF00291">
    <property type="entry name" value="PALP"/>
    <property type="match status" value="1"/>
</dbReference>
<dbReference type="PIRSF" id="PIRSF006278">
    <property type="entry name" value="ACCD_DCysDesulf"/>
    <property type="match status" value="1"/>
</dbReference>
<dbReference type="SUPFAM" id="SSF53686">
    <property type="entry name" value="Tryptophan synthase beta subunit-like PLP-dependent enzymes"/>
    <property type="match status" value="1"/>
</dbReference>
<sequence length="339" mass="36610">MLRLDKFKKYSLTFGVTPIEHLPRLTAALGGKVQIYAKRDDCNSGLAMGGNKLRKLEYIVPDAIESNADTLVSIGGVQSNHTRMVAATAAKIGMKCVVVQESWVPHEDAVYDRVGNILMTRLMGADSRIVEDGFDIGIRKSWENAIQSVKDAGGKPYGIPAGASVHKFGGLGYVGFAEEVRAQEAEMGIKFDYIIVCVVTGSTQGGMIVGFAADGRADRVIGIDASGTPEQTRAQVRQIVDNTAELVELGRKVRDDEIVILNDYAYPAYGVPSAETNEAIRLAARTEAMITDPVYEGKSMQGMIDLVKKGYFPEGSKVLYAHLGGAPAINGYSYTYRNG</sequence>
<keyword id="KW-0378">Hydrolase</keyword>
<keyword id="KW-0663">Pyridoxal phosphate</keyword>
<keyword id="KW-1185">Reference proteome</keyword>
<comment type="function">
    <text evidence="1">Catalyzes a cyclopropane ring-opening reaction, the irreversible conversion of 1-aminocyclopropane-1-carboxylate (ACC) to ammonia and alpha-ketobutyrate. Allows growth on ACC as a nitrogen source.</text>
</comment>
<comment type="catalytic activity">
    <reaction evidence="1">
        <text>1-aminocyclopropane-1-carboxylate + H2O = 2-oxobutanoate + NH4(+)</text>
        <dbReference type="Rhea" id="RHEA:16933"/>
        <dbReference type="ChEBI" id="CHEBI:15377"/>
        <dbReference type="ChEBI" id="CHEBI:16763"/>
        <dbReference type="ChEBI" id="CHEBI:28938"/>
        <dbReference type="ChEBI" id="CHEBI:58360"/>
        <dbReference type="EC" id="3.5.99.7"/>
    </reaction>
</comment>
<comment type="cofactor">
    <cofactor evidence="1">
        <name>pyridoxal 5'-phosphate</name>
        <dbReference type="ChEBI" id="CHEBI:597326"/>
    </cofactor>
</comment>
<comment type="subunit">
    <text evidence="1">Homotrimer.</text>
</comment>
<comment type="similarity">
    <text evidence="1">Belongs to the ACC deaminase/D-cysteine desulfhydrase family.</text>
</comment>
<reference key="1">
    <citation type="journal article" date="2007" name="Science">
        <title>Legumes symbioses: absence of nod genes in photosynthetic bradyrhizobia.</title>
        <authorList>
            <person name="Giraud E."/>
            <person name="Moulin L."/>
            <person name="Vallenet D."/>
            <person name="Barbe V."/>
            <person name="Cytryn E."/>
            <person name="Avarre J.-C."/>
            <person name="Jaubert M."/>
            <person name="Simon D."/>
            <person name="Cartieaux F."/>
            <person name="Prin Y."/>
            <person name="Bena G."/>
            <person name="Hannibal L."/>
            <person name="Fardoux J."/>
            <person name="Kojadinovic M."/>
            <person name="Vuillet L."/>
            <person name="Lajus A."/>
            <person name="Cruveiller S."/>
            <person name="Rouy Z."/>
            <person name="Mangenot S."/>
            <person name="Segurens B."/>
            <person name="Dossat C."/>
            <person name="Franck W.L."/>
            <person name="Chang W.-S."/>
            <person name="Saunders E."/>
            <person name="Bruce D."/>
            <person name="Richardson P."/>
            <person name="Normand P."/>
            <person name="Dreyfus B."/>
            <person name="Pignol D."/>
            <person name="Stacey G."/>
            <person name="Emerich D."/>
            <person name="Vermeglio A."/>
            <person name="Medigue C."/>
            <person name="Sadowsky M."/>
        </authorList>
    </citation>
    <scope>NUCLEOTIDE SEQUENCE [LARGE SCALE GENOMIC DNA]</scope>
    <source>
        <strain>ORS 278</strain>
    </source>
</reference>
<evidence type="ECO:0000255" key="1">
    <source>
        <dbReference type="HAMAP-Rule" id="MF_00807"/>
    </source>
</evidence>
<name>1A1D_BRASO</name>
<gene>
    <name evidence="1" type="primary">acdS</name>
    <name type="ordered locus">BRADO3803</name>
</gene>
<feature type="chain" id="PRO_0000304369" description="1-aminocyclopropane-1-carboxylate deaminase">
    <location>
        <begin position="1"/>
        <end position="339"/>
    </location>
</feature>
<feature type="active site" description="Nucleophile" evidence="1">
    <location>
        <position position="79"/>
    </location>
</feature>
<feature type="modified residue" description="N6-(pyridoxal phosphate)lysine" evidence="1">
    <location>
        <position position="52"/>
    </location>
</feature>